<protein>
    <recommendedName>
        <fullName>Major surface glycoprotein G</fullName>
    </recommendedName>
    <alternativeName>
        <fullName>Attachment glycoprotein G</fullName>
    </alternativeName>
    <alternativeName>
        <fullName>Membrane-bound glycoprotein</fullName>
        <shortName>mG</shortName>
    </alternativeName>
    <component>
        <recommendedName>
            <fullName evidence="2">Mature secreted glycoprotein G</fullName>
            <shortName evidence="2">Mature sG</shortName>
        </recommendedName>
    </component>
</protein>
<dbReference type="PIR" id="JQ1209">
    <property type="entry name" value="JQ1209"/>
</dbReference>
<dbReference type="SMR" id="P27026"/>
<dbReference type="GlyCosmos" id="P27026">
    <property type="glycosylation" value="31 sites, No reported glycans"/>
</dbReference>
<dbReference type="GO" id="GO:0005576">
    <property type="term" value="C:extracellular region"/>
    <property type="evidence" value="ECO:0007669"/>
    <property type="project" value="UniProtKB-SubCell"/>
</dbReference>
<dbReference type="GO" id="GO:0020002">
    <property type="term" value="C:host cell plasma membrane"/>
    <property type="evidence" value="ECO:0007669"/>
    <property type="project" value="UniProtKB-SubCell"/>
</dbReference>
<dbReference type="GO" id="GO:0016020">
    <property type="term" value="C:membrane"/>
    <property type="evidence" value="ECO:0007669"/>
    <property type="project" value="UniProtKB-KW"/>
</dbReference>
<dbReference type="GO" id="GO:0055036">
    <property type="term" value="C:virion membrane"/>
    <property type="evidence" value="ECO:0007669"/>
    <property type="project" value="UniProtKB-SubCell"/>
</dbReference>
<dbReference type="GO" id="GO:0046718">
    <property type="term" value="P:symbiont entry into host cell"/>
    <property type="evidence" value="ECO:0007669"/>
    <property type="project" value="UniProtKB-KW"/>
</dbReference>
<dbReference type="GO" id="GO:0019062">
    <property type="term" value="P:virion attachment to host cell"/>
    <property type="evidence" value="ECO:0007669"/>
    <property type="project" value="UniProtKB-KW"/>
</dbReference>
<dbReference type="InterPro" id="IPR000925">
    <property type="entry name" value="G_prot"/>
</dbReference>
<dbReference type="Pfam" id="PF00802">
    <property type="entry name" value="Glycoprotein_G"/>
    <property type="match status" value="1"/>
</dbReference>
<proteinExistence type="inferred from homology"/>
<reference key="1">
    <citation type="journal article" date="1991" name="J. Gen. Virol.">
        <title>Identification of variable domains of the attachment (G) protein of subgroup A respiratory syncytial viruses.</title>
        <authorList>
            <person name="Cane P.A."/>
            <person name="Matthews D.A."/>
            <person name="Pringle C.R."/>
        </authorList>
    </citation>
    <scope>NUCLEOTIDE SEQUENCE</scope>
</reference>
<organism>
    <name type="scientific">Human respiratory syncytial virus A (strain rsb6614)</name>
    <dbReference type="NCBI Taxonomy" id="11257"/>
    <lineage>
        <taxon>Viruses</taxon>
        <taxon>Riboviria</taxon>
        <taxon>Orthornavirae</taxon>
        <taxon>Negarnaviricota</taxon>
        <taxon>Haploviricotina</taxon>
        <taxon>Monjiviricetes</taxon>
        <taxon>Mononegavirales</taxon>
        <taxon>Pneumoviridae</taxon>
        <taxon>Orthopneumovirus</taxon>
        <taxon>Orthopneumovirus hominis</taxon>
    </lineage>
</organism>
<gene>
    <name type="primary">G</name>
</gene>
<evidence type="ECO:0000250" key="1">
    <source>
        <dbReference type="UniProtKB" id="P03423"/>
    </source>
</evidence>
<evidence type="ECO:0000250" key="2">
    <source>
        <dbReference type="UniProtKB" id="P20895"/>
    </source>
</evidence>
<evidence type="ECO:0000255" key="3"/>
<evidence type="ECO:0000256" key="4">
    <source>
        <dbReference type="SAM" id="MobiDB-lite"/>
    </source>
</evidence>
<evidence type="ECO:0000305" key="5"/>
<sequence>MSKTKDQRTAKTLERTWDTLNHLLFISSCLYKLNLKSIAQITLSILAMIISTSLIIAAIIFIASANHKVTLTTAIIQDATSQIKNTTPTYLTQNPQLGISFSNLSETTSQPATTPALTTPSAESTPQSTTVKTKNTTTTQIQPSKPTTKQHQNKPPNKPNNHFHFEVFNFVPCSICSNNPTCWAICKRIPNKKPGKKTTTKPTKKPTIKTTKKDLKPQTTKPKEVLTTKPTEKPTINTTKTNIRTTLLTTNTTGNPEYTSQKETLHSTSPEGNPSPSQVYTTSEYPSQPPSPSNTTD</sequence>
<name>GLYC_HRSV7</name>
<feature type="chain" id="PRO_0000142863" description="Major surface glycoprotein G">
    <location>
        <begin position="1"/>
        <end position="297"/>
    </location>
</feature>
<feature type="chain" id="PRO_0000451332" description="Mature secreted glycoprotein G">
    <location>
        <begin position="66"/>
        <end position="297"/>
    </location>
</feature>
<feature type="topological domain" description="Cytoplasmic" evidence="3">
    <location>
        <begin position="1"/>
        <end position="37"/>
    </location>
</feature>
<feature type="transmembrane region" description="Helical" evidence="3">
    <location>
        <begin position="38"/>
        <end position="66"/>
    </location>
</feature>
<feature type="topological domain" description="Extracellular" evidence="3">
    <location>
        <begin position="67"/>
        <end position="297"/>
    </location>
</feature>
<feature type="region of interest" description="Disordered" evidence="4">
    <location>
        <begin position="105"/>
        <end position="160"/>
    </location>
</feature>
<feature type="region of interest" description="Binding to host heparan sulfate" evidence="1">
    <location>
        <begin position="187"/>
        <end position="198"/>
    </location>
</feature>
<feature type="region of interest" description="Disordered" evidence="4">
    <location>
        <begin position="190"/>
        <end position="297"/>
    </location>
</feature>
<feature type="compositionally biased region" description="Low complexity" evidence="4">
    <location>
        <begin position="107"/>
        <end position="139"/>
    </location>
</feature>
<feature type="compositionally biased region" description="Low complexity" evidence="4">
    <location>
        <begin position="149"/>
        <end position="160"/>
    </location>
</feature>
<feature type="compositionally biased region" description="Basic residues" evidence="4">
    <location>
        <begin position="190"/>
        <end position="207"/>
    </location>
</feature>
<feature type="compositionally biased region" description="Basic and acidic residues" evidence="4">
    <location>
        <begin position="211"/>
        <end position="232"/>
    </location>
</feature>
<feature type="compositionally biased region" description="Low complexity" evidence="4">
    <location>
        <begin position="233"/>
        <end position="253"/>
    </location>
</feature>
<feature type="compositionally biased region" description="Polar residues" evidence="4">
    <location>
        <begin position="254"/>
        <end position="286"/>
    </location>
</feature>
<feature type="compositionally biased region" description="Pro residues" evidence="4">
    <location>
        <begin position="287"/>
        <end position="297"/>
    </location>
</feature>
<feature type="site" description="Cleavage" evidence="1">
    <location>
        <begin position="65"/>
        <end position="66"/>
    </location>
</feature>
<feature type="glycosylation site" description="O-linked (GalNAc...) threonine; by host" evidence="1">
    <location>
        <position position="70"/>
    </location>
</feature>
<feature type="glycosylation site" description="O-linked (GalNAc...) threonine; by host" evidence="1">
    <location>
        <position position="72"/>
    </location>
</feature>
<feature type="glycosylation site" description="O-linked (GalNAc...) threonine; by host" evidence="1">
    <location>
        <position position="80"/>
    </location>
</feature>
<feature type="glycosylation site" description="O-linked (GalNAc...) threonine; by host" evidence="1">
    <location>
        <position position="86"/>
    </location>
</feature>
<feature type="glycosylation site" description="O-linked (GalNAc...) threonine; by host" evidence="1">
    <location>
        <position position="87"/>
    </location>
</feature>
<feature type="glycosylation site" description="O-linked (GalNAc...) threonine; by host" evidence="1">
    <location>
        <position position="92"/>
    </location>
</feature>
<feature type="glycosylation site" description="O-linked (GalNAc...) serine; by host" evidence="3">
    <location>
        <position position="100"/>
    </location>
</feature>
<feature type="glycosylation site" description="N-linked (GlcNAc...) asparagine; by host" evidence="3">
    <location>
        <position position="103"/>
    </location>
</feature>
<feature type="glycosylation site" description="O-linked (GalNAc...) serine; by host" evidence="3">
    <location>
        <position position="105"/>
    </location>
</feature>
<feature type="glycosylation site" description="O-linked (GalNAc...) threonine; by host" evidence="3">
    <location>
        <position position="113"/>
    </location>
</feature>
<feature type="glycosylation site" description="O-linked (GalNAc...) threonine; by host" evidence="3">
    <location>
        <position position="119"/>
    </location>
</feature>
<feature type="glycosylation site" description="N-linked (GlcNAc...) asparagine; by host" evidence="3">
    <location>
        <position position="135"/>
    </location>
</feature>
<feature type="glycosylation site" description="O-linked (GalNAc...) threonine; by host" evidence="3">
    <location>
        <position position="137"/>
    </location>
</feature>
<feature type="glycosylation site" description="O-linked (GalNAc...) threonine; by host" evidence="3">
    <location>
        <position position="138"/>
    </location>
</feature>
<feature type="glycosylation site" description="O-linked (GalNAc...) threonine; by host" evidence="3">
    <location>
        <position position="139"/>
    </location>
</feature>
<feature type="glycosylation site" description="O-linked (GalNAc...) serine; by host" evidence="3">
    <location>
        <position position="144"/>
    </location>
</feature>
<feature type="glycosylation site" description="O-linked (GalNAc...) threonine; by host" evidence="3">
    <location>
        <position position="147"/>
    </location>
</feature>
<feature type="glycosylation site" description="O-linked (GalNAc...) threonine; by host" evidence="3">
    <location>
        <position position="199"/>
    </location>
</feature>
<feature type="glycosylation site" description="O-linked (GalNAc...) threonine; by host" evidence="3">
    <location>
        <position position="203"/>
    </location>
</feature>
<feature type="glycosylation site" description="O-linked (GalNAc...) threonine; by host" evidence="3">
    <location>
        <position position="219"/>
    </location>
</feature>
<feature type="glycosylation site" description="O-linked (GalNAc...) threonine; by host" evidence="3">
    <location>
        <position position="231"/>
    </location>
</feature>
<feature type="glycosylation site" description="O-linked (GalNAc...) threonine; by host" evidence="3">
    <location>
        <position position="235"/>
    </location>
</feature>
<feature type="glycosylation site" description="N-linked (GlcNAc...) asparagine; by host" evidence="3">
    <location>
        <position position="237"/>
    </location>
</feature>
<feature type="glycosylation site" description="N-linked (GlcNAc...) asparagine; by host" evidence="3">
    <location>
        <position position="251"/>
    </location>
</feature>
<feature type="glycosylation site" description="O-linked (GalNAc...) threonine; by host" evidence="3">
    <location>
        <position position="253"/>
    </location>
</feature>
<feature type="glycosylation site" description="O-linked (GalNAc...) serine; by host" evidence="3">
    <location>
        <position position="269"/>
    </location>
</feature>
<feature type="glycosylation site" description="O-linked (GalNAc...) serine; by host" evidence="3">
    <location>
        <position position="275"/>
    </location>
</feature>
<feature type="glycosylation site" description="O-linked (GalNAc...) threonine; by host" evidence="3">
    <location>
        <position position="282"/>
    </location>
</feature>
<feature type="glycosylation site" description="O-linked (GalNAc...) serine; by host" evidence="3">
    <location>
        <position position="283"/>
    </location>
</feature>
<feature type="glycosylation site" description="O-linked (GalNAc...) serine; by host" evidence="3">
    <location>
        <position position="287"/>
    </location>
</feature>
<feature type="glycosylation site" description="N-linked (GlcNAc...) asparagine; by host" evidence="3">
    <location>
        <position position="294"/>
    </location>
</feature>
<feature type="disulfide bond" evidence="1">
    <location>
        <begin position="173"/>
        <end position="186"/>
    </location>
</feature>
<feature type="disulfide bond" evidence="1">
    <location>
        <begin position="176"/>
        <end position="182"/>
    </location>
</feature>
<feature type="splice variant" id="VSP_036531" description="In isoform Secreted glycoprotein G." evidence="1">
    <location>
        <begin position="1"/>
        <end position="47"/>
    </location>
</feature>
<comment type="function">
    <molecule>Isoform Membrane-bound glycoprotein G</molecule>
    <text evidence="1">Attaches the virion to the host cell membrane by interacting with heparan sulfate, initiating the infection. Interacts with host CX3CR1, the receptor for the CX3C chemokine fractalkine, to modulate the immune response and facilitate infection. Unlike the other paramyxovirus attachment proteins, lacks both neuraminidase and hemagglutinating activities.</text>
</comment>
<comment type="function">
    <molecule>Isoform Secreted glycoprotein G</molecule>
    <text evidence="1">Helps the virus escape antibody-dependent restriction of replication by acting as an antigen decoy and by modulating the activity of leukocytes bearing Fc-gamma receptors.</text>
</comment>
<comment type="subunit">
    <molecule>Isoform Membrane-bound glycoprotein G</molecule>
    <text evidence="1">Homooligomer. Interacts (via N-terminus) with protein M. Part of a complex composed of F1, F2 and G glycoproteins. Interacts with protein SH. Interacts with host heparate sulfate; this interaction probably participates in the viral attachment to the host cell. Interacts with host CX3CR1; this interaction plays an important role in viral entry. Interacts with the host lectins CD209/DC-SIGN and CD209L/L-SIGN on dendritic cells; these interactions stimulate the phosphorylation of MAPK3/ERK1 and MAPK1/ERK2, which inhibits dendritic cell activation and could participate in the limited immunity against RSV reinfection.</text>
</comment>
<comment type="subcellular location">
    <molecule>Isoform Membrane-bound glycoprotein G</molecule>
    <subcellularLocation>
        <location evidence="1">Virion membrane</location>
        <topology evidence="1">Single-pass type II membrane protein</topology>
    </subcellularLocation>
    <subcellularLocation>
        <location evidence="1">Host cell membrane</location>
        <topology evidence="1">Single-pass type II membrane protein</topology>
    </subcellularLocation>
</comment>
<comment type="subcellular location">
    <molecule>Isoform Secreted glycoprotein G</molecule>
    <subcellularLocation>
        <location evidence="2">Secreted</location>
    </subcellularLocation>
    <text evidence="2">The protein is shed from infected cells before the appearance of progeny virus. The initiation at the downstream methionine removes a portion of the transmembrane domain. The remaining hydrophobic portion of the sG protein is essential for translocating it into the lumen of the ER during translation and would likely maintain its membrane association until a proteolytic event releases the mature sG protein into the medium.</text>
</comment>
<comment type="alternative products">
    <event type="alternative initiation"/>
    <isoform>
        <id>P27026-1</id>
        <name>Membrane-bound glycoprotein G</name>
        <sequence type="displayed"/>
    </isoform>
    <isoform>
        <id>P27026-2</id>
        <name>Secreted glycoprotein G</name>
        <sequence type="described" ref="VSP_036531"/>
    </isoform>
</comment>
<comment type="domain">
    <molecule>Isoform Membrane-bound glycoprotein G</molecule>
    <text evidence="1">Contains a linear heparin binding domain essential for virus attachment to the host.</text>
</comment>
<comment type="PTM">
    <molecule>Isoform Secreted glycoprotein G</molecule>
    <text evidence="2">Cleaved to give rise to the mature sG protein which lacks the transmembrane domain.</text>
</comment>
<comment type="PTM">
    <molecule>Isoform Membrane-bound glycoprotein G</molecule>
    <text evidence="1">N- and O-glycosylated. May carry 30-40 separate O-linked carbohydrate chains distributed among the 91 serine and threonine residues.</text>
</comment>
<comment type="PTM">
    <molecule>Isoform Membrane-bound glycoprotein G</molecule>
    <text evidence="1">Palmitoylated.</text>
</comment>
<comment type="similarity">
    <text evidence="5">Belongs to the pneumoviruses glycoprotein G family.</text>
</comment>
<keyword id="KW-0024">Alternative initiation</keyword>
<keyword id="KW-1015">Disulfide bond</keyword>
<keyword id="KW-0325">Glycoprotein</keyword>
<keyword id="KW-1032">Host cell membrane</keyword>
<keyword id="KW-1043">Host membrane</keyword>
<keyword id="KW-0945">Host-virus interaction</keyword>
<keyword id="KW-0472">Membrane</keyword>
<keyword id="KW-0964">Secreted</keyword>
<keyword id="KW-0812">Transmembrane</keyword>
<keyword id="KW-1133">Transmembrane helix</keyword>
<keyword id="KW-1161">Viral attachment to host cell</keyword>
<keyword id="KW-0899">Viral immunoevasion</keyword>
<keyword id="KW-0946">Virion</keyword>
<keyword id="KW-1160">Virus entry into host cell</keyword>
<accession>P27026</accession>
<organismHost>
    <name type="scientific">Homo sapiens</name>
    <name type="common">Human</name>
    <dbReference type="NCBI Taxonomy" id="9606"/>
</organismHost>